<protein>
    <recommendedName>
        <fullName>Probable succinyl-CoA:3-ketoacid coenzyme A transferase subunit B</fullName>
        <ecNumber>2.8.3.5</ecNumber>
    </recommendedName>
    <alternativeName>
        <fullName>OXCT B</fullName>
    </alternativeName>
    <alternativeName>
        <fullName>Succinyl-CoA:3-oxoacid CoA-transferase</fullName>
    </alternativeName>
</protein>
<name>SCOB_BACSU</name>
<accession>P42316</accession>
<dbReference type="EC" id="2.8.3.5"/>
<dbReference type="EMBL" id="D83026">
    <property type="protein sequence ID" value="BAA11706.1"/>
    <property type="molecule type" value="Genomic_DNA"/>
</dbReference>
<dbReference type="EMBL" id="AL009126">
    <property type="protein sequence ID" value="CAB15924.1"/>
    <property type="molecule type" value="Genomic_DNA"/>
</dbReference>
<dbReference type="PIR" id="C70079">
    <property type="entry name" value="C70079"/>
</dbReference>
<dbReference type="RefSeq" id="NP_391777.1">
    <property type="nucleotide sequence ID" value="NC_000964.3"/>
</dbReference>
<dbReference type="RefSeq" id="WP_003243049.1">
    <property type="nucleotide sequence ID" value="NZ_OZ025638.1"/>
</dbReference>
<dbReference type="PDB" id="3CDK">
    <property type="method" value="X-ray"/>
    <property type="resolution" value="2.59 A"/>
    <property type="chains" value="B/D=1-216"/>
</dbReference>
<dbReference type="PDBsum" id="3CDK"/>
<dbReference type="SMR" id="P42316"/>
<dbReference type="FunCoup" id="P42316">
    <property type="interactions" value="102"/>
</dbReference>
<dbReference type="STRING" id="224308.BSU38980"/>
<dbReference type="PaxDb" id="224308-BSU38980"/>
<dbReference type="DNASU" id="937453"/>
<dbReference type="EnsemblBacteria" id="CAB15924">
    <property type="protein sequence ID" value="CAB15924"/>
    <property type="gene ID" value="BSU_38980"/>
</dbReference>
<dbReference type="GeneID" id="937453"/>
<dbReference type="KEGG" id="bsu:BSU38980"/>
<dbReference type="PATRIC" id="fig|224308.179.peg.4218"/>
<dbReference type="eggNOG" id="COG2057">
    <property type="taxonomic scope" value="Bacteria"/>
</dbReference>
<dbReference type="InParanoid" id="P42316"/>
<dbReference type="OrthoDB" id="9778604at2"/>
<dbReference type="PhylomeDB" id="P42316"/>
<dbReference type="BioCyc" id="BSUB:BSU38980-MONOMER"/>
<dbReference type="EvolutionaryTrace" id="P42316"/>
<dbReference type="Proteomes" id="UP000001570">
    <property type="component" value="Chromosome"/>
</dbReference>
<dbReference type="GO" id="GO:0008410">
    <property type="term" value="F:CoA-transferase activity"/>
    <property type="evidence" value="ECO:0000318"/>
    <property type="project" value="GO_Central"/>
</dbReference>
<dbReference type="GO" id="GO:0008260">
    <property type="term" value="F:succinyl-CoA:3-oxo-acid CoA-transferase activity"/>
    <property type="evidence" value="ECO:0007669"/>
    <property type="project" value="UniProtKB-EC"/>
</dbReference>
<dbReference type="FunFam" id="3.40.1080.10:FF:000001">
    <property type="entry name" value="Succinyl-coa:3-ketoacid-coenzyme a transferase subunit b"/>
    <property type="match status" value="1"/>
</dbReference>
<dbReference type="Gene3D" id="3.40.1080.10">
    <property type="entry name" value="Glutaconate Coenzyme A-transferase"/>
    <property type="match status" value="1"/>
</dbReference>
<dbReference type="InterPro" id="IPR012791">
    <property type="entry name" value="3-oxoacid_CoA-transf_B"/>
</dbReference>
<dbReference type="InterPro" id="IPR004165">
    <property type="entry name" value="CoA_trans_fam_I"/>
</dbReference>
<dbReference type="InterPro" id="IPR004164">
    <property type="entry name" value="CoA_transf_AS"/>
</dbReference>
<dbReference type="InterPro" id="IPR037171">
    <property type="entry name" value="NagB/RpiA_transferase-like"/>
</dbReference>
<dbReference type="NCBIfam" id="TIGR02428">
    <property type="entry name" value="pcaJ_scoB_fam"/>
    <property type="match status" value="1"/>
</dbReference>
<dbReference type="PANTHER" id="PTHR13707">
    <property type="entry name" value="KETOACID-COENZYME A TRANSFERASE"/>
    <property type="match status" value="1"/>
</dbReference>
<dbReference type="PANTHER" id="PTHR13707:SF57">
    <property type="entry name" value="SUCCINYL-COA:3-KETOACID COENZYME A TRANSFERASE SUBUNIT B-RELATED"/>
    <property type="match status" value="1"/>
</dbReference>
<dbReference type="Pfam" id="PF01144">
    <property type="entry name" value="CoA_trans"/>
    <property type="match status" value="1"/>
</dbReference>
<dbReference type="SMART" id="SM00882">
    <property type="entry name" value="CoA_trans"/>
    <property type="match status" value="1"/>
</dbReference>
<dbReference type="SUPFAM" id="SSF100950">
    <property type="entry name" value="NagB/RpiA/CoA transferase-like"/>
    <property type="match status" value="1"/>
</dbReference>
<dbReference type="PROSITE" id="PS01274">
    <property type="entry name" value="COA_TRANSF_2"/>
    <property type="match status" value="1"/>
</dbReference>
<gene>
    <name type="primary">scoB</name>
    <name type="synonym">yxjE</name>
    <name type="ordered locus">BSU38980</name>
    <name type="ORF">N15L</name>
</gene>
<keyword id="KW-0002">3D-structure</keyword>
<keyword id="KW-1185">Reference proteome</keyword>
<keyword id="KW-0808">Transferase</keyword>
<organism>
    <name type="scientific">Bacillus subtilis (strain 168)</name>
    <dbReference type="NCBI Taxonomy" id="224308"/>
    <lineage>
        <taxon>Bacteria</taxon>
        <taxon>Bacillati</taxon>
        <taxon>Bacillota</taxon>
        <taxon>Bacilli</taxon>
        <taxon>Bacillales</taxon>
        <taxon>Bacillaceae</taxon>
        <taxon>Bacillus</taxon>
    </lineage>
</organism>
<evidence type="ECO:0000250" key="1"/>
<evidence type="ECO:0000255" key="2">
    <source>
        <dbReference type="PROSITE-ProRule" id="PRU10034"/>
    </source>
</evidence>
<evidence type="ECO:0000305" key="3"/>
<evidence type="ECO:0007829" key="4">
    <source>
        <dbReference type="PDB" id="3CDK"/>
    </source>
</evidence>
<proteinExistence type="evidence at protein level"/>
<sequence length="216" mass="23331">MKEARKRMVKRAVQEIKDGMNVNLGIGMPTLVANEIPDGVHVMLQSENGLLGIGPYPLEGTEDADLINAGKETITEVTGASYFDSAESFAMIRGGHIDLAILGGMEVSEQGDLANWMIPGKMVKGMGGAMDLVNGAKRIVVIMEHVNKHGESKVKKTCSLPLTGQKVVHRLITDLAVFDFVNGRMTLTELQDGVTIEEVYEKTEADFAVSQSVLNS</sequence>
<comment type="catalytic activity">
    <reaction evidence="2">
        <text>a 3-oxo acid + succinyl-CoA = a 3-oxoacyl-CoA + succinate</text>
        <dbReference type="Rhea" id="RHEA:24564"/>
        <dbReference type="ChEBI" id="CHEBI:30031"/>
        <dbReference type="ChEBI" id="CHEBI:35973"/>
        <dbReference type="ChEBI" id="CHEBI:57292"/>
        <dbReference type="ChEBI" id="CHEBI:90726"/>
        <dbReference type="EC" id="2.8.3.5"/>
    </reaction>
</comment>
<comment type="subunit">
    <text evidence="1">Heterodimer of a subunit A and a subunit B.</text>
</comment>
<comment type="similarity">
    <text evidence="3">Belongs to the 3-oxoacid CoA-transferase subunit B family.</text>
</comment>
<reference key="1">
    <citation type="journal article" date="1996" name="Microbiology">
        <title>Sequencing of a 65 kb region of the Bacillus subtilis genome containing the lic and cel loci, and creation of a 177 kb contig covering the gnt-sacXY region.</title>
        <authorList>
            <person name="Yoshida K."/>
            <person name="Shindo K."/>
            <person name="Sano H."/>
            <person name="Seki S."/>
            <person name="Fujimura M."/>
            <person name="Yanai N."/>
            <person name="Miwa Y."/>
            <person name="Fujita Y."/>
        </authorList>
    </citation>
    <scope>NUCLEOTIDE SEQUENCE [GENOMIC DNA]</scope>
    <source>
        <strain>168 / BGSC1A1</strain>
    </source>
</reference>
<reference key="2">
    <citation type="journal article" date="1997" name="Nature">
        <title>The complete genome sequence of the Gram-positive bacterium Bacillus subtilis.</title>
        <authorList>
            <person name="Kunst F."/>
            <person name="Ogasawara N."/>
            <person name="Moszer I."/>
            <person name="Albertini A.M."/>
            <person name="Alloni G."/>
            <person name="Azevedo V."/>
            <person name="Bertero M.G."/>
            <person name="Bessieres P."/>
            <person name="Bolotin A."/>
            <person name="Borchert S."/>
            <person name="Borriss R."/>
            <person name="Boursier L."/>
            <person name="Brans A."/>
            <person name="Braun M."/>
            <person name="Brignell S.C."/>
            <person name="Bron S."/>
            <person name="Brouillet S."/>
            <person name="Bruschi C.V."/>
            <person name="Caldwell B."/>
            <person name="Capuano V."/>
            <person name="Carter N.M."/>
            <person name="Choi S.-K."/>
            <person name="Codani J.-J."/>
            <person name="Connerton I.F."/>
            <person name="Cummings N.J."/>
            <person name="Daniel R.A."/>
            <person name="Denizot F."/>
            <person name="Devine K.M."/>
            <person name="Duesterhoeft A."/>
            <person name="Ehrlich S.D."/>
            <person name="Emmerson P.T."/>
            <person name="Entian K.-D."/>
            <person name="Errington J."/>
            <person name="Fabret C."/>
            <person name="Ferrari E."/>
            <person name="Foulger D."/>
            <person name="Fritz C."/>
            <person name="Fujita M."/>
            <person name="Fujita Y."/>
            <person name="Fuma S."/>
            <person name="Galizzi A."/>
            <person name="Galleron N."/>
            <person name="Ghim S.-Y."/>
            <person name="Glaser P."/>
            <person name="Goffeau A."/>
            <person name="Golightly E.J."/>
            <person name="Grandi G."/>
            <person name="Guiseppi G."/>
            <person name="Guy B.J."/>
            <person name="Haga K."/>
            <person name="Haiech J."/>
            <person name="Harwood C.R."/>
            <person name="Henaut A."/>
            <person name="Hilbert H."/>
            <person name="Holsappel S."/>
            <person name="Hosono S."/>
            <person name="Hullo M.-F."/>
            <person name="Itaya M."/>
            <person name="Jones L.-M."/>
            <person name="Joris B."/>
            <person name="Karamata D."/>
            <person name="Kasahara Y."/>
            <person name="Klaerr-Blanchard M."/>
            <person name="Klein C."/>
            <person name="Kobayashi Y."/>
            <person name="Koetter P."/>
            <person name="Koningstein G."/>
            <person name="Krogh S."/>
            <person name="Kumano M."/>
            <person name="Kurita K."/>
            <person name="Lapidus A."/>
            <person name="Lardinois S."/>
            <person name="Lauber J."/>
            <person name="Lazarevic V."/>
            <person name="Lee S.-M."/>
            <person name="Levine A."/>
            <person name="Liu H."/>
            <person name="Masuda S."/>
            <person name="Mauel C."/>
            <person name="Medigue C."/>
            <person name="Medina N."/>
            <person name="Mellado R.P."/>
            <person name="Mizuno M."/>
            <person name="Moestl D."/>
            <person name="Nakai S."/>
            <person name="Noback M."/>
            <person name="Noone D."/>
            <person name="O'Reilly M."/>
            <person name="Ogawa K."/>
            <person name="Ogiwara A."/>
            <person name="Oudega B."/>
            <person name="Park S.-H."/>
            <person name="Parro V."/>
            <person name="Pohl T.M."/>
            <person name="Portetelle D."/>
            <person name="Porwollik S."/>
            <person name="Prescott A.M."/>
            <person name="Presecan E."/>
            <person name="Pujic P."/>
            <person name="Purnelle B."/>
            <person name="Rapoport G."/>
            <person name="Rey M."/>
            <person name="Reynolds S."/>
            <person name="Rieger M."/>
            <person name="Rivolta C."/>
            <person name="Rocha E."/>
            <person name="Roche B."/>
            <person name="Rose M."/>
            <person name="Sadaie Y."/>
            <person name="Sato T."/>
            <person name="Scanlan E."/>
            <person name="Schleich S."/>
            <person name="Schroeter R."/>
            <person name="Scoffone F."/>
            <person name="Sekiguchi J."/>
            <person name="Sekowska A."/>
            <person name="Seror S.J."/>
            <person name="Serror P."/>
            <person name="Shin B.-S."/>
            <person name="Soldo B."/>
            <person name="Sorokin A."/>
            <person name="Tacconi E."/>
            <person name="Takagi T."/>
            <person name="Takahashi H."/>
            <person name="Takemaru K."/>
            <person name="Takeuchi M."/>
            <person name="Tamakoshi A."/>
            <person name="Tanaka T."/>
            <person name="Terpstra P."/>
            <person name="Tognoni A."/>
            <person name="Tosato V."/>
            <person name="Uchiyama S."/>
            <person name="Vandenbol M."/>
            <person name="Vannier F."/>
            <person name="Vassarotti A."/>
            <person name="Viari A."/>
            <person name="Wambutt R."/>
            <person name="Wedler E."/>
            <person name="Wedler H."/>
            <person name="Weitzenegger T."/>
            <person name="Winters P."/>
            <person name="Wipat A."/>
            <person name="Yamamoto H."/>
            <person name="Yamane K."/>
            <person name="Yasumoto K."/>
            <person name="Yata K."/>
            <person name="Yoshida K."/>
            <person name="Yoshikawa H.-F."/>
            <person name="Zumstein E."/>
            <person name="Yoshikawa H."/>
            <person name="Danchin A."/>
        </authorList>
    </citation>
    <scope>NUCLEOTIDE SEQUENCE [LARGE SCALE GENOMIC DNA]</scope>
    <source>
        <strain>168</strain>
    </source>
</reference>
<feature type="chain" id="PRO_0000157920" description="Probable succinyl-CoA:3-ketoacid coenzyme A transferase subunit B">
    <location>
        <begin position="1"/>
        <end position="216"/>
    </location>
</feature>
<feature type="active site" evidence="2">
    <location>
        <position position="47"/>
    </location>
</feature>
<feature type="helix" evidence="4">
    <location>
        <begin position="2"/>
        <end position="13"/>
    </location>
</feature>
<feature type="strand" evidence="4">
    <location>
        <begin position="21"/>
        <end position="24"/>
    </location>
</feature>
<feature type="helix" evidence="4">
    <location>
        <begin position="28"/>
        <end position="33"/>
    </location>
</feature>
<feature type="strand" evidence="4">
    <location>
        <begin position="43"/>
        <end position="46"/>
    </location>
</feature>
<feature type="turn" evidence="4">
    <location>
        <begin position="47"/>
        <end position="49"/>
    </location>
</feature>
<feature type="strand" evidence="4">
    <location>
        <begin position="50"/>
        <end position="54"/>
    </location>
</feature>
<feature type="turn" evidence="4">
    <location>
        <begin position="59"/>
        <end position="61"/>
    </location>
</feature>
<feature type="strand" evidence="4">
    <location>
        <begin position="71"/>
        <end position="73"/>
    </location>
</feature>
<feature type="strand" evidence="4">
    <location>
        <begin position="75"/>
        <end position="82"/>
    </location>
</feature>
<feature type="helix" evidence="4">
    <location>
        <begin position="85"/>
        <end position="93"/>
    </location>
</feature>
<feature type="strand" evidence="4">
    <location>
        <begin position="99"/>
        <end position="102"/>
    </location>
</feature>
<feature type="strand" evidence="4">
    <location>
        <begin position="105"/>
        <end position="108"/>
    </location>
</feature>
<feature type="helix" evidence="4">
    <location>
        <begin position="129"/>
        <end position="135"/>
    </location>
</feature>
<feature type="strand" evidence="4">
    <location>
        <begin position="136"/>
        <end position="142"/>
    </location>
</feature>
<feature type="strand" evidence="4">
    <location>
        <begin position="152"/>
        <end position="157"/>
    </location>
</feature>
<feature type="strand" evidence="4">
    <location>
        <begin position="163"/>
        <end position="166"/>
    </location>
</feature>
<feature type="strand" evidence="4">
    <location>
        <begin position="169"/>
        <end position="172"/>
    </location>
</feature>
<feature type="strand" evidence="4">
    <location>
        <begin position="174"/>
        <end position="181"/>
    </location>
</feature>
<feature type="strand" evidence="4">
    <location>
        <begin position="184"/>
        <end position="190"/>
    </location>
</feature>
<feature type="helix" evidence="4">
    <location>
        <begin position="196"/>
        <end position="201"/>
    </location>
</feature>